<organism>
    <name type="scientific">Escherichia coli (strain SMS-3-5 / SECEC)</name>
    <dbReference type="NCBI Taxonomy" id="439855"/>
    <lineage>
        <taxon>Bacteria</taxon>
        <taxon>Pseudomonadati</taxon>
        <taxon>Pseudomonadota</taxon>
        <taxon>Gammaproteobacteria</taxon>
        <taxon>Enterobacterales</taxon>
        <taxon>Enterobacteriaceae</taxon>
        <taxon>Escherichia</taxon>
    </lineage>
</organism>
<gene>
    <name evidence="1" type="primary">rsmF</name>
    <name type="ordered locus">EcSMS35_1352</name>
</gene>
<reference key="1">
    <citation type="journal article" date="2008" name="J. Bacteriol.">
        <title>Insights into the environmental resistance gene pool from the genome sequence of the multidrug-resistant environmental isolate Escherichia coli SMS-3-5.</title>
        <authorList>
            <person name="Fricke W.F."/>
            <person name="Wright M.S."/>
            <person name="Lindell A.H."/>
            <person name="Harkins D.M."/>
            <person name="Baker-Austin C."/>
            <person name="Ravel J."/>
            <person name="Stepanauskas R."/>
        </authorList>
    </citation>
    <scope>NUCLEOTIDE SEQUENCE [LARGE SCALE GENOMIC DNA]</scope>
    <source>
        <strain>SMS-3-5 / SECEC</strain>
    </source>
</reference>
<evidence type="ECO:0000255" key="1">
    <source>
        <dbReference type="HAMAP-Rule" id="MF_01579"/>
    </source>
</evidence>
<evidence type="ECO:0000305" key="2"/>
<comment type="function">
    <text evidence="1">Specifically methylates the cytosine at position 1407 (m5C1407) of 16S rRNA.</text>
</comment>
<comment type="catalytic activity">
    <reaction evidence="1">
        <text>cytidine(1407) in 16S rRNA + S-adenosyl-L-methionine = 5-methylcytidine(1407) in 16S rRNA + S-adenosyl-L-homocysteine + H(+)</text>
        <dbReference type="Rhea" id="RHEA:42756"/>
        <dbReference type="Rhea" id="RHEA-COMP:10223"/>
        <dbReference type="Rhea" id="RHEA-COMP:10224"/>
        <dbReference type="ChEBI" id="CHEBI:15378"/>
        <dbReference type="ChEBI" id="CHEBI:57856"/>
        <dbReference type="ChEBI" id="CHEBI:59789"/>
        <dbReference type="ChEBI" id="CHEBI:74483"/>
        <dbReference type="ChEBI" id="CHEBI:82748"/>
        <dbReference type="EC" id="2.1.1.178"/>
    </reaction>
</comment>
<comment type="subcellular location">
    <subcellularLocation>
        <location evidence="1">Cytoplasm</location>
    </subcellularLocation>
</comment>
<comment type="similarity">
    <text evidence="1">Belongs to the class I-like SAM-binding methyltransferase superfamily. RsmB/NOP family.</text>
</comment>
<comment type="sequence caution" evidence="2">
    <conflict type="erroneous initiation">
        <sequence resource="EMBL-CDS" id="ACB19838"/>
    </conflict>
</comment>
<feature type="chain" id="PRO_0000382574" description="Ribosomal RNA small subunit methyltransferase F">
    <location>
        <begin position="1"/>
        <end position="479"/>
    </location>
</feature>
<feature type="active site" description="Nucleophile" evidence="1">
    <location>
        <position position="247"/>
    </location>
</feature>
<feature type="binding site" evidence="1">
    <location>
        <begin position="125"/>
        <end position="131"/>
    </location>
    <ligand>
        <name>S-adenosyl-L-methionine</name>
        <dbReference type="ChEBI" id="CHEBI:59789"/>
    </ligand>
</feature>
<feature type="binding site" evidence="1">
    <location>
        <position position="149"/>
    </location>
    <ligand>
        <name>S-adenosyl-L-methionine</name>
        <dbReference type="ChEBI" id="CHEBI:59789"/>
    </ligand>
</feature>
<feature type="binding site" evidence="1">
    <location>
        <position position="176"/>
    </location>
    <ligand>
        <name>S-adenosyl-L-methionine</name>
        <dbReference type="ChEBI" id="CHEBI:59789"/>
    </ligand>
</feature>
<feature type="binding site" evidence="1">
    <location>
        <position position="194"/>
    </location>
    <ligand>
        <name>S-adenosyl-L-methionine</name>
        <dbReference type="ChEBI" id="CHEBI:59789"/>
    </ligand>
</feature>
<proteinExistence type="inferred from homology"/>
<accession>B1LD37</accession>
<protein>
    <recommendedName>
        <fullName evidence="1">Ribosomal RNA small subunit methyltransferase F</fullName>
        <ecNumber evidence="1">2.1.1.178</ecNumber>
    </recommendedName>
    <alternativeName>
        <fullName evidence="1">16S rRNA m5C1407 methyltransferase</fullName>
    </alternativeName>
    <alternativeName>
        <fullName evidence="1">rRNA (cytosine-C(5)-)-methyltransferase RsmF</fullName>
    </alternativeName>
</protein>
<dbReference type="EC" id="2.1.1.178" evidence="1"/>
<dbReference type="EMBL" id="CP000970">
    <property type="protein sequence ID" value="ACB19838.1"/>
    <property type="status" value="ALT_INIT"/>
    <property type="molecule type" value="Genomic_DNA"/>
</dbReference>
<dbReference type="RefSeq" id="WP_024175799.1">
    <property type="nucleotide sequence ID" value="NC_010498.1"/>
</dbReference>
<dbReference type="SMR" id="B1LD37"/>
<dbReference type="KEGG" id="ecm:EcSMS35_1352"/>
<dbReference type="HOGENOM" id="CLU_005316_6_2_6"/>
<dbReference type="Proteomes" id="UP000007011">
    <property type="component" value="Chromosome"/>
</dbReference>
<dbReference type="GO" id="GO:0005737">
    <property type="term" value="C:cytoplasm"/>
    <property type="evidence" value="ECO:0007669"/>
    <property type="project" value="UniProtKB-SubCell"/>
</dbReference>
<dbReference type="GO" id="GO:0003723">
    <property type="term" value="F:RNA binding"/>
    <property type="evidence" value="ECO:0007669"/>
    <property type="project" value="UniProtKB-KW"/>
</dbReference>
<dbReference type="GO" id="GO:0009383">
    <property type="term" value="F:rRNA (cytosine-C5-)-methyltransferase activity"/>
    <property type="evidence" value="ECO:0007669"/>
    <property type="project" value="TreeGrafter"/>
</dbReference>
<dbReference type="GO" id="GO:0070475">
    <property type="term" value="P:rRNA base methylation"/>
    <property type="evidence" value="ECO:0007669"/>
    <property type="project" value="TreeGrafter"/>
</dbReference>
<dbReference type="CDD" id="cd02440">
    <property type="entry name" value="AdoMet_MTases"/>
    <property type="match status" value="1"/>
</dbReference>
<dbReference type="FunFam" id="3.10.450.720:FF:000001">
    <property type="entry name" value="Ribosomal RNA small subunit methyltransferase F"/>
    <property type="match status" value="1"/>
</dbReference>
<dbReference type="FunFam" id="3.40.50.150:FF:000079">
    <property type="entry name" value="Ribosomal RNA small subunit methyltransferase F"/>
    <property type="match status" value="1"/>
</dbReference>
<dbReference type="Gene3D" id="3.10.450.720">
    <property type="match status" value="1"/>
</dbReference>
<dbReference type="Gene3D" id="3.40.50.150">
    <property type="entry name" value="Vaccinia Virus protein VP39"/>
    <property type="match status" value="1"/>
</dbReference>
<dbReference type="HAMAP" id="MF_01579">
    <property type="entry name" value="16SrRNA_methyltr_F"/>
    <property type="match status" value="1"/>
</dbReference>
<dbReference type="InterPro" id="IPR031341">
    <property type="entry name" value="Methyltr_RsmF_N"/>
</dbReference>
<dbReference type="InterPro" id="IPR049560">
    <property type="entry name" value="MeTrfase_RsmB-F_NOP2_cat"/>
</dbReference>
<dbReference type="InterPro" id="IPR001678">
    <property type="entry name" value="MeTrfase_RsmB-F_NOP2_dom"/>
</dbReference>
<dbReference type="InterPro" id="IPR027391">
    <property type="entry name" value="Nol1_Nop2_Fmu_2"/>
</dbReference>
<dbReference type="InterPro" id="IPR011023">
    <property type="entry name" value="Nop2p"/>
</dbReference>
<dbReference type="InterPro" id="IPR023267">
    <property type="entry name" value="RCMT"/>
</dbReference>
<dbReference type="InterPro" id="IPR023545">
    <property type="entry name" value="rRNA_ssu_MeTfrase_F"/>
</dbReference>
<dbReference type="InterPro" id="IPR018314">
    <property type="entry name" value="RsmB/NOL1/NOP2-like_CS"/>
</dbReference>
<dbReference type="InterPro" id="IPR029063">
    <property type="entry name" value="SAM-dependent_MTases_sf"/>
</dbReference>
<dbReference type="InterPro" id="IPR048457">
    <property type="entry name" value="YebU_pre-PUA_dom"/>
</dbReference>
<dbReference type="NCBIfam" id="TIGR00446">
    <property type="entry name" value="nop2p"/>
    <property type="match status" value="1"/>
</dbReference>
<dbReference type="NCBIfam" id="NF008898">
    <property type="entry name" value="PRK11933.1"/>
    <property type="match status" value="1"/>
</dbReference>
<dbReference type="PANTHER" id="PTHR22807:SF30">
    <property type="entry name" value="28S RRNA (CYTOSINE(4447)-C(5))-METHYLTRANSFERASE-RELATED"/>
    <property type="match status" value="1"/>
</dbReference>
<dbReference type="PANTHER" id="PTHR22807">
    <property type="entry name" value="NOP2 YEAST -RELATED NOL1/NOP2/FMU SUN DOMAIN-CONTAINING"/>
    <property type="match status" value="1"/>
</dbReference>
<dbReference type="Pfam" id="PF01189">
    <property type="entry name" value="Methyltr_RsmB-F"/>
    <property type="match status" value="1"/>
</dbReference>
<dbReference type="Pfam" id="PF17125">
    <property type="entry name" value="Methyltr_RsmF_N"/>
    <property type="match status" value="1"/>
</dbReference>
<dbReference type="Pfam" id="PF13636">
    <property type="entry name" value="Methyltranf_PUA"/>
    <property type="match status" value="1"/>
</dbReference>
<dbReference type="Pfam" id="PF21150">
    <property type="entry name" value="YebU_pre-PUA_dom"/>
    <property type="match status" value="1"/>
</dbReference>
<dbReference type="PRINTS" id="PR02008">
    <property type="entry name" value="RCMTFAMILY"/>
</dbReference>
<dbReference type="SUPFAM" id="SSF53335">
    <property type="entry name" value="S-adenosyl-L-methionine-dependent methyltransferases"/>
    <property type="match status" value="1"/>
</dbReference>
<dbReference type="PROSITE" id="PS01153">
    <property type="entry name" value="NOL1_NOP2_SUN"/>
    <property type="match status" value="1"/>
</dbReference>
<dbReference type="PROSITE" id="PS51686">
    <property type="entry name" value="SAM_MT_RSMB_NOP"/>
    <property type="match status" value="1"/>
</dbReference>
<keyword id="KW-0963">Cytoplasm</keyword>
<keyword id="KW-0489">Methyltransferase</keyword>
<keyword id="KW-0694">RNA-binding</keyword>
<keyword id="KW-0698">rRNA processing</keyword>
<keyword id="KW-0949">S-adenosyl-L-methionine</keyword>
<keyword id="KW-0808">Transferase</keyword>
<name>RSMF_ECOSM</name>
<sequence>MAQHTVYFPDAFLTQMREAMPSTLSFDDFLAACQRPLRRSIRVNTLKISVADFLQLTAPYGWTLTPIPWCEEGFWIERDDEDALPLGSTAEHLSGLFYIQEASSMLPVAALFADGNAPQRVMDVAAAPGSKTTQIAARMNNEGAILANEFSASRVKVLHANISRCGISNVALTHFDGRVFGAAVPEMFDAILLDAPCSGEGVVRKDPDALKNWSPESNQEIAATQRELIDSAFHALRPGGTLVYSTCTLNREENEAVCLWLKETYPDAVEFLPLGDLFPGANKALTEEGFLHVFPQIYDCEGFFVARLRKTQAIPVLPAPKYKVGNFPFSPVKDREAGQIRQAAAGVGLNWDGNLRLWQRDKELWLFPVGIEALIGKVRFSRLGIKLAETHNKGYRWQHEAVIALASPDNVNAFELTPQEAEEWYRGRDVYPQAAPVADDVLVTFQHQPIGLAKRIGSRLKNSYPRELVRDGKLFTGNA</sequence>